<feature type="peptide" id="PRO_0000015751" description="Insulin B chain" evidence="1">
    <location>
        <begin position="1"/>
        <end position="30"/>
    </location>
</feature>
<feature type="peptide" id="PRO_0000015752" description="Insulin A chain" evidence="1">
    <location>
        <begin position="31"/>
        <end position="51"/>
    </location>
</feature>
<feature type="disulfide bond" description="Interchain (between B and A chains)">
    <location>
        <begin position="7"/>
        <end position="37"/>
    </location>
</feature>
<feature type="disulfide bond" description="Interchain (between B and A chains)">
    <location>
        <begin position="19"/>
        <end position="50"/>
    </location>
</feature>
<feature type="disulfide bond">
    <location>
        <begin position="36"/>
        <end position="41"/>
    </location>
</feature>
<feature type="non-consecutive residues" evidence="2">
    <location>
        <begin position="30"/>
        <end position="31"/>
    </location>
</feature>
<proteinExistence type="evidence at protein level"/>
<evidence type="ECO:0000269" key="1">
    <source>
    </source>
</evidence>
<evidence type="ECO:0000305" key="2"/>
<organism>
    <name type="scientific">Anguilla rostrata</name>
    <name type="common">American eel</name>
    <name type="synonym">Muraena rostrata</name>
    <dbReference type="NCBI Taxonomy" id="7938"/>
    <lineage>
        <taxon>Eukaryota</taxon>
        <taxon>Metazoa</taxon>
        <taxon>Chordata</taxon>
        <taxon>Craniata</taxon>
        <taxon>Vertebrata</taxon>
        <taxon>Euteleostomi</taxon>
        <taxon>Actinopterygii</taxon>
        <taxon>Neopterygii</taxon>
        <taxon>Teleostei</taxon>
        <taxon>Anguilliformes</taxon>
        <taxon>Anguillidae</taxon>
        <taxon>Anguilla</taxon>
    </lineage>
</organism>
<gene>
    <name type="primary">ins</name>
</gene>
<sequence length="51" mass="5652">ASTQHLCGSHLVEALYLVCGSNGFFFNPKDGIVEQCCHKPCSIFDLQNYCN</sequence>
<comment type="function">
    <text>Insulin decreases blood glucose concentration. It increases cell permeability to monosaccharides, amino acids and fatty acids. It accelerates glycolysis, the pentose phosphate cycle, and glycogen synthesis in liver.</text>
</comment>
<comment type="subunit">
    <text>Heterodimer of a B chain and an A chain linked by two disulfide bonds.</text>
</comment>
<comment type="subcellular location">
    <subcellularLocation>
        <location>Secreted</location>
    </subcellularLocation>
</comment>
<comment type="similarity">
    <text evidence="2">Belongs to the insulin family.</text>
</comment>
<name>INS_ANGRO</name>
<keyword id="KW-0119">Carbohydrate metabolism</keyword>
<keyword id="KW-0903">Direct protein sequencing</keyword>
<keyword id="KW-1015">Disulfide bond</keyword>
<keyword id="KW-0313">Glucose metabolism</keyword>
<keyword id="KW-0372">Hormone</keyword>
<keyword id="KW-0964">Secreted</keyword>
<protein>
    <recommendedName>
        <fullName>Insulin</fullName>
    </recommendedName>
    <component>
        <recommendedName>
            <fullName>Insulin B chain</fullName>
        </recommendedName>
    </component>
    <component>
        <recommendedName>
            <fullName>Insulin A chain</fullName>
        </recommendedName>
    </component>
</protein>
<accession>P42633</accession>
<dbReference type="PIR" id="A61125">
    <property type="entry name" value="A61125"/>
</dbReference>
<dbReference type="SMR" id="P42633"/>
<dbReference type="GO" id="GO:0005615">
    <property type="term" value="C:extracellular space"/>
    <property type="evidence" value="ECO:0007669"/>
    <property type="project" value="TreeGrafter"/>
</dbReference>
<dbReference type="GO" id="GO:0005179">
    <property type="term" value="F:hormone activity"/>
    <property type="evidence" value="ECO:0007669"/>
    <property type="project" value="UniProtKB-KW"/>
</dbReference>
<dbReference type="GO" id="GO:0006006">
    <property type="term" value="P:glucose metabolic process"/>
    <property type="evidence" value="ECO:0007669"/>
    <property type="project" value="UniProtKB-KW"/>
</dbReference>
<dbReference type="CDD" id="cd04367">
    <property type="entry name" value="IlGF_insulin_like"/>
    <property type="match status" value="1"/>
</dbReference>
<dbReference type="Gene3D" id="1.10.100.10">
    <property type="entry name" value="Insulin-like"/>
    <property type="match status" value="2"/>
</dbReference>
<dbReference type="InterPro" id="IPR004825">
    <property type="entry name" value="Insulin"/>
</dbReference>
<dbReference type="InterPro" id="IPR016179">
    <property type="entry name" value="Insulin-like"/>
</dbReference>
<dbReference type="InterPro" id="IPR036438">
    <property type="entry name" value="Insulin-like_sf"/>
</dbReference>
<dbReference type="InterPro" id="IPR022353">
    <property type="entry name" value="Insulin_CS"/>
</dbReference>
<dbReference type="InterPro" id="IPR022352">
    <property type="entry name" value="Insulin_family"/>
</dbReference>
<dbReference type="PANTHER" id="PTHR11454:SF9">
    <property type="entry name" value="INSULIN"/>
    <property type="match status" value="1"/>
</dbReference>
<dbReference type="PANTHER" id="PTHR11454">
    <property type="entry name" value="INSULIN/INSULIN GROWTH FACTOR"/>
    <property type="match status" value="1"/>
</dbReference>
<dbReference type="Pfam" id="PF00049">
    <property type="entry name" value="Insulin"/>
    <property type="match status" value="1"/>
</dbReference>
<dbReference type="PRINTS" id="PR00277">
    <property type="entry name" value="INSULIN"/>
</dbReference>
<dbReference type="PRINTS" id="PR00276">
    <property type="entry name" value="INSULINFAMLY"/>
</dbReference>
<dbReference type="SMART" id="SM00078">
    <property type="entry name" value="IlGF"/>
    <property type="match status" value="1"/>
</dbReference>
<dbReference type="SUPFAM" id="SSF56994">
    <property type="entry name" value="Insulin-like"/>
    <property type="match status" value="1"/>
</dbReference>
<dbReference type="PROSITE" id="PS00262">
    <property type="entry name" value="INSULIN"/>
    <property type="match status" value="1"/>
</dbReference>
<reference key="1">
    <citation type="journal article" date="1991" name="Gen. Comp. Endocrinol.">
        <title>The primary structure of glucagon-like peptide but not insulin has been conserved between the American eel, Anguilla rostrata and the European eel, Anguilla anguilla.</title>
        <authorList>
            <person name="Conlon J.M."/>
            <person name="Andrews P.C."/>
            <person name="Thim L."/>
            <person name="Moon T.W."/>
        </authorList>
    </citation>
    <scope>PROTEIN SEQUENCE</scope>
    <source>
        <tissue>Pancreas</tissue>
    </source>
</reference>